<comment type="function">
    <text evidence="1">Catalyzes the phosphorylation of D-fructose 6-phosphate to fructose 1,6-bisphosphate by ATP, the first committing step of glycolysis.</text>
</comment>
<comment type="catalytic activity">
    <reaction evidence="1">
        <text>beta-D-fructose 6-phosphate + ATP = beta-D-fructose 1,6-bisphosphate + ADP + H(+)</text>
        <dbReference type="Rhea" id="RHEA:16109"/>
        <dbReference type="ChEBI" id="CHEBI:15378"/>
        <dbReference type="ChEBI" id="CHEBI:30616"/>
        <dbReference type="ChEBI" id="CHEBI:32966"/>
        <dbReference type="ChEBI" id="CHEBI:57634"/>
        <dbReference type="ChEBI" id="CHEBI:456216"/>
        <dbReference type="EC" id="2.7.1.11"/>
    </reaction>
</comment>
<comment type="cofactor">
    <cofactor evidence="1">
        <name>Mg(2+)</name>
        <dbReference type="ChEBI" id="CHEBI:18420"/>
    </cofactor>
</comment>
<comment type="activity regulation">
    <text evidence="1">Allosterically activated by ADP and other diphosphonucleosides, and allosterically inhibited by phosphoenolpyruvate.</text>
</comment>
<comment type="pathway">
    <text evidence="1">Carbohydrate degradation; glycolysis; D-glyceraldehyde 3-phosphate and glycerone phosphate from D-glucose: step 3/4.</text>
</comment>
<comment type="subunit">
    <text evidence="1">Homotetramer.</text>
</comment>
<comment type="subcellular location">
    <subcellularLocation>
        <location evidence="1">Cytoplasm</location>
    </subcellularLocation>
</comment>
<comment type="similarity">
    <text evidence="1">Belongs to the phosphofructokinase type A (PFKA) family. ATP-dependent PFK group I subfamily. Prokaryotic clade 'B1' sub-subfamily.</text>
</comment>
<keyword id="KW-0021">Allosteric enzyme</keyword>
<keyword id="KW-0067">ATP-binding</keyword>
<keyword id="KW-0963">Cytoplasm</keyword>
<keyword id="KW-0324">Glycolysis</keyword>
<keyword id="KW-0418">Kinase</keyword>
<keyword id="KW-0460">Magnesium</keyword>
<keyword id="KW-0479">Metal-binding</keyword>
<keyword id="KW-0547">Nucleotide-binding</keyword>
<keyword id="KW-0808">Transferase</keyword>
<evidence type="ECO:0000255" key="1">
    <source>
        <dbReference type="HAMAP-Rule" id="MF_00339"/>
    </source>
</evidence>
<protein>
    <recommendedName>
        <fullName evidence="1">ATP-dependent 6-phosphofructokinase</fullName>
        <shortName evidence="1">ATP-PFK</shortName>
        <shortName evidence="1">Phosphofructokinase</shortName>
        <ecNumber evidence="1">2.7.1.11</ecNumber>
    </recommendedName>
    <alternativeName>
        <fullName evidence="1">Phosphohexokinase</fullName>
    </alternativeName>
</protein>
<gene>
    <name evidence="1" type="primary">pfkA</name>
    <name type="ordered locus">NWMN_1593</name>
</gene>
<reference key="1">
    <citation type="journal article" date="2008" name="J. Bacteriol.">
        <title>Genome sequence of Staphylococcus aureus strain Newman and comparative analysis of staphylococcal genomes: polymorphism and evolution of two major pathogenicity islands.</title>
        <authorList>
            <person name="Baba T."/>
            <person name="Bae T."/>
            <person name="Schneewind O."/>
            <person name="Takeuchi F."/>
            <person name="Hiramatsu K."/>
        </authorList>
    </citation>
    <scope>NUCLEOTIDE SEQUENCE [LARGE SCALE GENOMIC DNA]</scope>
    <source>
        <strain>Newman</strain>
    </source>
</reference>
<accession>A6QHN3</accession>
<dbReference type="EC" id="2.7.1.11" evidence="1"/>
<dbReference type="EMBL" id="AP009351">
    <property type="protein sequence ID" value="BAF67865.1"/>
    <property type="molecule type" value="Genomic_DNA"/>
</dbReference>
<dbReference type="RefSeq" id="WP_000717561.1">
    <property type="nucleotide sequence ID" value="NZ_JBBIAE010000009.1"/>
</dbReference>
<dbReference type="SMR" id="A6QHN3"/>
<dbReference type="KEGG" id="sae:NWMN_1593"/>
<dbReference type="HOGENOM" id="CLU_020655_0_1_9"/>
<dbReference type="UniPathway" id="UPA00109">
    <property type="reaction ID" value="UER00182"/>
</dbReference>
<dbReference type="Proteomes" id="UP000006386">
    <property type="component" value="Chromosome"/>
</dbReference>
<dbReference type="GO" id="GO:0005945">
    <property type="term" value="C:6-phosphofructokinase complex"/>
    <property type="evidence" value="ECO:0007669"/>
    <property type="project" value="TreeGrafter"/>
</dbReference>
<dbReference type="GO" id="GO:0003872">
    <property type="term" value="F:6-phosphofructokinase activity"/>
    <property type="evidence" value="ECO:0007669"/>
    <property type="project" value="UniProtKB-UniRule"/>
</dbReference>
<dbReference type="GO" id="GO:0016208">
    <property type="term" value="F:AMP binding"/>
    <property type="evidence" value="ECO:0007669"/>
    <property type="project" value="TreeGrafter"/>
</dbReference>
<dbReference type="GO" id="GO:0005524">
    <property type="term" value="F:ATP binding"/>
    <property type="evidence" value="ECO:0007669"/>
    <property type="project" value="UniProtKB-KW"/>
</dbReference>
<dbReference type="GO" id="GO:0070095">
    <property type="term" value="F:fructose-6-phosphate binding"/>
    <property type="evidence" value="ECO:0007669"/>
    <property type="project" value="TreeGrafter"/>
</dbReference>
<dbReference type="GO" id="GO:0042802">
    <property type="term" value="F:identical protein binding"/>
    <property type="evidence" value="ECO:0007669"/>
    <property type="project" value="TreeGrafter"/>
</dbReference>
<dbReference type="GO" id="GO:0046872">
    <property type="term" value="F:metal ion binding"/>
    <property type="evidence" value="ECO:0007669"/>
    <property type="project" value="UniProtKB-KW"/>
</dbReference>
<dbReference type="GO" id="GO:0048029">
    <property type="term" value="F:monosaccharide binding"/>
    <property type="evidence" value="ECO:0007669"/>
    <property type="project" value="TreeGrafter"/>
</dbReference>
<dbReference type="GO" id="GO:0061621">
    <property type="term" value="P:canonical glycolysis"/>
    <property type="evidence" value="ECO:0007669"/>
    <property type="project" value="TreeGrafter"/>
</dbReference>
<dbReference type="GO" id="GO:0030388">
    <property type="term" value="P:fructose 1,6-bisphosphate metabolic process"/>
    <property type="evidence" value="ECO:0007669"/>
    <property type="project" value="TreeGrafter"/>
</dbReference>
<dbReference type="GO" id="GO:0006002">
    <property type="term" value="P:fructose 6-phosphate metabolic process"/>
    <property type="evidence" value="ECO:0007669"/>
    <property type="project" value="InterPro"/>
</dbReference>
<dbReference type="FunFam" id="3.40.50.450:FF:000001">
    <property type="entry name" value="ATP-dependent 6-phosphofructokinase"/>
    <property type="match status" value="1"/>
</dbReference>
<dbReference type="FunFam" id="3.40.50.460:FF:000002">
    <property type="entry name" value="ATP-dependent 6-phosphofructokinase"/>
    <property type="match status" value="1"/>
</dbReference>
<dbReference type="Gene3D" id="3.40.50.450">
    <property type="match status" value="1"/>
</dbReference>
<dbReference type="Gene3D" id="3.40.50.460">
    <property type="entry name" value="Phosphofructokinase domain"/>
    <property type="match status" value="1"/>
</dbReference>
<dbReference type="HAMAP" id="MF_00339">
    <property type="entry name" value="Phosphofructokinase_I_B1"/>
    <property type="match status" value="1"/>
</dbReference>
<dbReference type="InterPro" id="IPR022953">
    <property type="entry name" value="ATP_PFK"/>
</dbReference>
<dbReference type="InterPro" id="IPR012003">
    <property type="entry name" value="ATP_PFK_prok-type"/>
</dbReference>
<dbReference type="InterPro" id="IPR012828">
    <property type="entry name" value="PFKA_ATP_prok"/>
</dbReference>
<dbReference type="InterPro" id="IPR015912">
    <property type="entry name" value="Phosphofructokinase_CS"/>
</dbReference>
<dbReference type="InterPro" id="IPR000023">
    <property type="entry name" value="Phosphofructokinase_dom"/>
</dbReference>
<dbReference type="InterPro" id="IPR035966">
    <property type="entry name" value="PKF_sf"/>
</dbReference>
<dbReference type="NCBIfam" id="TIGR02482">
    <property type="entry name" value="PFKA_ATP"/>
    <property type="match status" value="1"/>
</dbReference>
<dbReference type="NCBIfam" id="NF002872">
    <property type="entry name" value="PRK03202.1"/>
    <property type="match status" value="1"/>
</dbReference>
<dbReference type="PANTHER" id="PTHR13697:SF4">
    <property type="entry name" value="ATP-DEPENDENT 6-PHOSPHOFRUCTOKINASE"/>
    <property type="match status" value="1"/>
</dbReference>
<dbReference type="PANTHER" id="PTHR13697">
    <property type="entry name" value="PHOSPHOFRUCTOKINASE"/>
    <property type="match status" value="1"/>
</dbReference>
<dbReference type="Pfam" id="PF00365">
    <property type="entry name" value="PFK"/>
    <property type="match status" value="1"/>
</dbReference>
<dbReference type="PIRSF" id="PIRSF000532">
    <property type="entry name" value="ATP_PFK_prok"/>
    <property type="match status" value="1"/>
</dbReference>
<dbReference type="PRINTS" id="PR00476">
    <property type="entry name" value="PHFRCTKINASE"/>
</dbReference>
<dbReference type="SUPFAM" id="SSF53784">
    <property type="entry name" value="Phosphofructokinase"/>
    <property type="match status" value="1"/>
</dbReference>
<dbReference type="PROSITE" id="PS00433">
    <property type="entry name" value="PHOSPHOFRUCTOKINASE"/>
    <property type="match status" value="1"/>
</dbReference>
<organism>
    <name type="scientific">Staphylococcus aureus (strain Newman)</name>
    <dbReference type="NCBI Taxonomy" id="426430"/>
    <lineage>
        <taxon>Bacteria</taxon>
        <taxon>Bacillati</taxon>
        <taxon>Bacillota</taxon>
        <taxon>Bacilli</taxon>
        <taxon>Bacillales</taxon>
        <taxon>Staphylococcaceae</taxon>
        <taxon>Staphylococcus</taxon>
    </lineage>
</organism>
<proteinExistence type="inferred from homology"/>
<name>PFKA_STAAE</name>
<feature type="chain" id="PRO_1000072057" description="ATP-dependent 6-phosphofructokinase">
    <location>
        <begin position="1"/>
        <end position="322"/>
    </location>
</feature>
<feature type="active site" description="Proton acceptor" evidence="1">
    <location>
        <position position="129"/>
    </location>
</feature>
<feature type="binding site" evidence="1">
    <location>
        <position position="11"/>
    </location>
    <ligand>
        <name>ATP</name>
        <dbReference type="ChEBI" id="CHEBI:30616"/>
    </ligand>
</feature>
<feature type="binding site" evidence="1">
    <location>
        <begin position="21"/>
        <end position="25"/>
    </location>
    <ligand>
        <name>ADP</name>
        <dbReference type="ChEBI" id="CHEBI:456216"/>
        <note>allosteric activator; ligand shared between dimeric partners</note>
    </ligand>
</feature>
<feature type="binding site" evidence="1">
    <location>
        <begin position="72"/>
        <end position="73"/>
    </location>
    <ligand>
        <name>ATP</name>
        <dbReference type="ChEBI" id="CHEBI:30616"/>
    </ligand>
</feature>
<feature type="binding site" evidence="1">
    <location>
        <begin position="102"/>
        <end position="105"/>
    </location>
    <ligand>
        <name>ATP</name>
        <dbReference type="ChEBI" id="CHEBI:30616"/>
    </ligand>
</feature>
<feature type="binding site" evidence="1">
    <location>
        <position position="103"/>
    </location>
    <ligand>
        <name>Mg(2+)</name>
        <dbReference type="ChEBI" id="CHEBI:18420"/>
        <note>catalytic</note>
    </ligand>
</feature>
<feature type="binding site" description="in other chain" evidence="1">
    <location>
        <begin position="127"/>
        <end position="129"/>
    </location>
    <ligand>
        <name>substrate</name>
        <note>ligand shared between dimeric partners</note>
    </ligand>
</feature>
<feature type="binding site" description="in other chain" evidence="1">
    <location>
        <position position="156"/>
    </location>
    <ligand>
        <name>ADP</name>
        <dbReference type="ChEBI" id="CHEBI:456216"/>
        <note>allosteric activator; ligand shared between dimeric partners</note>
    </ligand>
</feature>
<feature type="binding site" evidence="1">
    <location>
        <position position="164"/>
    </location>
    <ligand>
        <name>substrate</name>
        <note>ligand shared between dimeric partners</note>
    </ligand>
</feature>
<feature type="binding site" description="in other chain" evidence="1">
    <location>
        <begin position="171"/>
        <end position="173"/>
    </location>
    <ligand>
        <name>substrate</name>
        <note>ligand shared between dimeric partners</note>
    </ligand>
</feature>
<feature type="binding site" description="in other chain" evidence="1">
    <location>
        <begin position="187"/>
        <end position="189"/>
    </location>
    <ligand>
        <name>ADP</name>
        <dbReference type="ChEBI" id="CHEBI:456216"/>
        <note>allosteric activator; ligand shared between dimeric partners</note>
    </ligand>
</feature>
<feature type="binding site" description="in other chain" evidence="1">
    <location>
        <position position="213"/>
    </location>
    <ligand>
        <name>ADP</name>
        <dbReference type="ChEBI" id="CHEBI:456216"/>
        <note>allosteric activator; ligand shared between dimeric partners</note>
    </ligand>
</feature>
<feature type="binding site" description="in other chain" evidence="1">
    <location>
        <begin position="215"/>
        <end position="217"/>
    </location>
    <ligand>
        <name>ADP</name>
        <dbReference type="ChEBI" id="CHEBI:456216"/>
        <note>allosteric activator; ligand shared between dimeric partners</note>
    </ligand>
</feature>
<feature type="binding site" description="in other chain" evidence="1">
    <location>
        <position position="224"/>
    </location>
    <ligand>
        <name>substrate</name>
        <note>ligand shared between dimeric partners</note>
    </ligand>
</feature>
<feature type="binding site" evidence="1">
    <location>
        <position position="245"/>
    </location>
    <ligand>
        <name>substrate</name>
        <note>ligand shared between dimeric partners</note>
    </ligand>
</feature>
<feature type="binding site" description="in other chain" evidence="1">
    <location>
        <begin position="251"/>
        <end position="254"/>
    </location>
    <ligand>
        <name>substrate</name>
        <note>ligand shared between dimeric partners</note>
    </ligand>
</feature>
<sequence length="322" mass="34840">MKKIAVLTSGGDSPGMNAAVRAVVRTAIYNEIEVYGVYHGYQGLLNDDIHKLELGSVGDTIQRGGTFLYSARCPEFKEQEVRKVAIENLRKRGIEGLVVIGGDGSYRGAQRISEECKEIQTIGIPGTIDNDINGTDFTIGFDTALNTIIGLVDKIRDTASSHARTFIIEAMGRDCGDLALWAGLSVGAETIVVPEVKTDIKEIADKIEQGIKRGKKHSIVLVAEGCMTAQDCQKELSQYINVDNRVSVLGHVQRGGSPTGADRVLASRLGGYAVDLLMQGETAKGVGIKNNKIVATSFDEIFDGKDHKFDYSLYELANKLSI</sequence>